<name>RISB_GLAP5</name>
<feature type="chain" id="PRO_1000195492" description="6,7-dimethyl-8-ribityllumazine synthase">
    <location>
        <begin position="1"/>
        <end position="153"/>
    </location>
</feature>
<feature type="active site" description="Proton donor" evidence="1">
    <location>
        <position position="88"/>
    </location>
</feature>
<feature type="binding site" evidence="1">
    <location>
        <position position="22"/>
    </location>
    <ligand>
        <name>5-amino-6-(D-ribitylamino)uracil</name>
        <dbReference type="ChEBI" id="CHEBI:15934"/>
    </ligand>
</feature>
<feature type="binding site" evidence="1">
    <location>
        <begin position="56"/>
        <end position="58"/>
    </location>
    <ligand>
        <name>5-amino-6-(D-ribitylamino)uracil</name>
        <dbReference type="ChEBI" id="CHEBI:15934"/>
    </ligand>
</feature>
<feature type="binding site" evidence="1">
    <location>
        <begin position="80"/>
        <end position="82"/>
    </location>
    <ligand>
        <name>5-amino-6-(D-ribitylamino)uracil</name>
        <dbReference type="ChEBI" id="CHEBI:15934"/>
    </ligand>
</feature>
<feature type="binding site" evidence="1">
    <location>
        <begin position="85"/>
        <end position="86"/>
    </location>
    <ligand>
        <name>(2S)-2-hydroxy-3-oxobutyl phosphate</name>
        <dbReference type="ChEBI" id="CHEBI:58830"/>
    </ligand>
</feature>
<feature type="binding site" evidence="1">
    <location>
        <position position="113"/>
    </location>
    <ligand>
        <name>5-amino-6-(D-ribitylamino)uracil</name>
        <dbReference type="ChEBI" id="CHEBI:15934"/>
    </ligand>
</feature>
<feature type="binding site" evidence="1">
    <location>
        <position position="127"/>
    </location>
    <ligand>
        <name>(2S)-2-hydroxy-3-oxobutyl phosphate</name>
        <dbReference type="ChEBI" id="CHEBI:58830"/>
    </ligand>
</feature>
<dbReference type="EC" id="2.5.1.78" evidence="1"/>
<dbReference type="EMBL" id="CP001321">
    <property type="protein sequence ID" value="ACL32750.1"/>
    <property type="molecule type" value="Genomic_DNA"/>
</dbReference>
<dbReference type="SMR" id="B8F5Z8"/>
<dbReference type="STRING" id="557723.HAPS_1137"/>
<dbReference type="KEGG" id="hap:HAPS_1137"/>
<dbReference type="HOGENOM" id="CLU_089358_1_1_6"/>
<dbReference type="UniPathway" id="UPA00275">
    <property type="reaction ID" value="UER00404"/>
</dbReference>
<dbReference type="Proteomes" id="UP000006743">
    <property type="component" value="Chromosome"/>
</dbReference>
<dbReference type="GO" id="GO:0005829">
    <property type="term" value="C:cytosol"/>
    <property type="evidence" value="ECO:0007669"/>
    <property type="project" value="TreeGrafter"/>
</dbReference>
<dbReference type="GO" id="GO:0009349">
    <property type="term" value="C:riboflavin synthase complex"/>
    <property type="evidence" value="ECO:0007669"/>
    <property type="project" value="InterPro"/>
</dbReference>
<dbReference type="GO" id="GO:0000906">
    <property type="term" value="F:6,7-dimethyl-8-ribityllumazine synthase activity"/>
    <property type="evidence" value="ECO:0007669"/>
    <property type="project" value="UniProtKB-UniRule"/>
</dbReference>
<dbReference type="GO" id="GO:0009231">
    <property type="term" value="P:riboflavin biosynthetic process"/>
    <property type="evidence" value="ECO:0007669"/>
    <property type="project" value="UniProtKB-UniRule"/>
</dbReference>
<dbReference type="CDD" id="cd09209">
    <property type="entry name" value="Lumazine_synthase-I"/>
    <property type="match status" value="1"/>
</dbReference>
<dbReference type="FunFam" id="3.40.50.960:FF:000001">
    <property type="entry name" value="6,7-dimethyl-8-ribityllumazine synthase"/>
    <property type="match status" value="1"/>
</dbReference>
<dbReference type="Gene3D" id="3.40.50.960">
    <property type="entry name" value="Lumazine/riboflavin synthase"/>
    <property type="match status" value="1"/>
</dbReference>
<dbReference type="HAMAP" id="MF_00178">
    <property type="entry name" value="Lumazine_synth"/>
    <property type="match status" value="1"/>
</dbReference>
<dbReference type="InterPro" id="IPR034964">
    <property type="entry name" value="LS"/>
</dbReference>
<dbReference type="InterPro" id="IPR002180">
    <property type="entry name" value="LS/RS"/>
</dbReference>
<dbReference type="InterPro" id="IPR036467">
    <property type="entry name" value="LS/RS_sf"/>
</dbReference>
<dbReference type="NCBIfam" id="TIGR00114">
    <property type="entry name" value="lumazine-synth"/>
    <property type="match status" value="1"/>
</dbReference>
<dbReference type="NCBIfam" id="NF000812">
    <property type="entry name" value="PRK00061.1-4"/>
    <property type="match status" value="1"/>
</dbReference>
<dbReference type="PANTHER" id="PTHR21058:SF0">
    <property type="entry name" value="6,7-DIMETHYL-8-RIBITYLLUMAZINE SYNTHASE"/>
    <property type="match status" value="1"/>
</dbReference>
<dbReference type="PANTHER" id="PTHR21058">
    <property type="entry name" value="6,7-DIMETHYL-8-RIBITYLLUMAZINE SYNTHASE DMRL SYNTHASE LUMAZINE SYNTHASE"/>
    <property type="match status" value="1"/>
</dbReference>
<dbReference type="Pfam" id="PF00885">
    <property type="entry name" value="DMRL_synthase"/>
    <property type="match status" value="1"/>
</dbReference>
<dbReference type="SUPFAM" id="SSF52121">
    <property type="entry name" value="Lumazine synthase"/>
    <property type="match status" value="1"/>
</dbReference>
<reference key="1">
    <citation type="journal article" date="2009" name="J. Bacteriol.">
        <title>Complete genome sequence of Haemophilus parasuis SH0165.</title>
        <authorList>
            <person name="Yue M."/>
            <person name="Yang F."/>
            <person name="Yang J."/>
            <person name="Bei W."/>
            <person name="Cai X."/>
            <person name="Chen L."/>
            <person name="Dong J."/>
            <person name="Zhou R."/>
            <person name="Jin M."/>
            <person name="Jin Q."/>
            <person name="Chen H."/>
        </authorList>
    </citation>
    <scope>NUCLEOTIDE SEQUENCE [LARGE SCALE GENOMIC DNA]</scope>
    <source>
        <strain>SH0165</strain>
    </source>
</reference>
<organism>
    <name type="scientific">Glaesserella parasuis serovar 5 (strain SH0165)</name>
    <name type="common">Haemophilus parasuis</name>
    <dbReference type="NCBI Taxonomy" id="557723"/>
    <lineage>
        <taxon>Bacteria</taxon>
        <taxon>Pseudomonadati</taxon>
        <taxon>Pseudomonadota</taxon>
        <taxon>Gammaproteobacteria</taxon>
        <taxon>Pasteurellales</taxon>
        <taxon>Pasteurellaceae</taxon>
        <taxon>Glaesserella</taxon>
    </lineage>
</organism>
<evidence type="ECO:0000255" key="1">
    <source>
        <dbReference type="HAMAP-Rule" id="MF_00178"/>
    </source>
</evidence>
<proteinExistence type="inferred from homology"/>
<protein>
    <recommendedName>
        <fullName evidence="1">6,7-dimethyl-8-ribityllumazine synthase</fullName>
        <shortName evidence="1">DMRL synthase</shortName>
        <shortName evidence="1">LS</shortName>
        <shortName evidence="1">Lumazine synthase</shortName>
        <ecNumber evidence="1">2.5.1.78</ecNumber>
    </recommendedName>
</protein>
<sequence>MAIITGNLVATELKFGIVCARFNDFINDKLLSGAIDTLVRHGASESDIDTAWVPGAFEIPLVAKKMAESGKYDAVICLGTVIRGSTTHYDYVCNEAAKGIGAVSLQTGVPVIFGVLTTENIEQAIERAGTKAGNKGSECALGAIEMVNVLKGL</sequence>
<accession>B8F5Z8</accession>
<gene>
    <name evidence="1" type="primary">ribH</name>
    <name type="ordered locus">HAPS_1137</name>
</gene>
<comment type="function">
    <text evidence="1">Catalyzes the formation of 6,7-dimethyl-8-ribityllumazine by condensation of 5-amino-6-(D-ribitylamino)uracil with 3,4-dihydroxy-2-butanone 4-phosphate. This is the penultimate step in the biosynthesis of riboflavin.</text>
</comment>
<comment type="catalytic activity">
    <reaction evidence="1">
        <text>(2S)-2-hydroxy-3-oxobutyl phosphate + 5-amino-6-(D-ribitylamino)uracil = 6,7-dimethyl-8-(1-D-ribityl)lumazine + phosphate + 2 H2O + H(+)</text>
        <dbReference type="Rhea" id="RHEA:26152"/>
        <dbReference type="ChEBI" id="CHEBI:15377"/>
        <dbReference type="ChEBI" id="CHEBI:15378"/>
        <dbReference type="ChEBI" id="CHEBI:15934"/>
        <dbReference type="ChEBI" id="CHEBI:43474"/>
        <dbReference type="ChEBI" id="CHEBI:58201"/>
        <dbReference type="ChEBI" id="CHEBI:58830"/>
        <dbReference type="EC" id="2.5.1.78"/>
    </reaction>
</comment>
<comment type="pathway">
    <text evidence="1">Cofactor biosynthesis; riboflavin biosynthesis; riboflavin from 2-hydroxy-3-oxobutyl phosphate and 5-amino-6-(D-ribitylamino)uracil: step 1/2.</text>
</comment>
<comment type="subunit">
    <text evidence="1">Forms an icosahedral capsid composed of 60 subunits, arranged as a dodecamer of pentamers.</text>
</comment>
<comment type="similarity">
    <text evidence="1">Belongs to the DMRL synthase family.</text>
</comment>
<keyword id="KW-1185">Reference proteome</keyword>
<keyword id="KW-0686">Riboflavin biosynthesis</keyword>
<keyword id="KW-0808">Transferase</keyword>